<reference key="1">
    <citation type="journal article" date="1995" name="Gene">
        <title>Three genes hrdB, hrdD and hrdT of Streptomyces griseus IMRU 3570, encoding sigma factor-like proteins, are differentially expressed under specific nutritional conditions.</title>
        <authorList>
            <person name="Marcos A.T."/>
            <person name="Diez B."/>
            <person name="Gutierrez S."/>
            <person name="Fernandez F.J."/>
            <person name="Oguiza J.A."/>
            <person name="Martin J.F."/>
        </authorList>
    </citation>
    <scope>NUCLEOTIDE SEQUENCE [GENOMIC DNA]</scope>
    <source>
        <strain>IMRU 3570</strain>
    </source>
</reference>
<gene>
    <name type="primary">nat</name>
</gene>
<dbReference type="EC" id="2.3.1.-"/>
<dbReference type="EMBL" id="X79980">
    <property type="protein sequence ID" value="CAA56304.1"/>
    <property type="molecule type" value="Genomic_DNA"/>
</dbReference>
<dbReference type="PIR" id="S49184">
    <property type="entry name" value="S49184"/>
</dbReference>
<dbReference type="SMR" id="Q54225"/>
<dbReference type="GO" id="GO:0016747">
    <property type="term" value="F:acyltransferase activity, transferring groups other than amino-acyl groups"/>
    <property type="evidence" value="ECO:0007669"/>
    <property type="project" value="InterPro"/>
</dbReference>
<dbReference type="Gene3D" id="3.40.630.30">
    <property type="match status" value="1"/>
</dbReference>
<dbReference type="InterPro" id="IPR016181">
    <property type="entry name" value="Acyl_CoA_acyltransferase"/>
</dbReference>
<dbReference type="InterPro" id="IPR000182">
    <property type="entry name" value="GNAT_dom"/>
</dbReference>
<dbReference type="PANTHER" id="PTHR43072">
    <property type="entry name" value="N-ACETYLTRANSFERASE"/>
    <property type="match status" value="1"/>
</dbReference>
<dbReference type="PANTHER" id="PTHR43072:SF23">
    <property type="entry name" value="UPF0039 PROTEIN C11D3.02C"/>
    <property type="match status" value="1"/>
</dbReference>
<dbReference type="Pfam" id="PF00583">
    <property type="entry name" value="Acetyltransf_1"/>
    <property type="match status" value="1"/>
</dbReference>
<dbReference type="SUPFAM" id="SSF55729">
    <property type="entry name" value="Acyl-CoA N-acyltransferases (Nat)"/>
    <property type="match status" value="1"/>
</dbReference>
<dbReference type="PROSITE" id="PS51186">
    <property type="entry name" value="GNAT"/>
    <property type="match status" value="1"/>
</dbReference>
<proteinExistence type="inferred from homology"/>
<organism>
    <name type="scientific">Streptomyces griseus</name>
    <dbReference type="NCBI Taxonomy" id="1911"/>
    <lineage>
        <taxon>Bacteria</taxon>
        <taxon>Bacillati</taxon>
        <taxon>Actinomycetota</taxon>
        <taxon>Actinomycetes</taxon>
        <taxon>Kitasatosporales</taxon>
        <taxon>Streptomycetaceae</taxon>
        <taxon>Streptomyces</taxon>
    </lineage>
</organism>
<protein>
    <recommendedName>
        <fullName>N-acetyltransferase</fullName>
        <ecNumber>2.3.1.-</ecNumber>
    </recommendedName>
</protein>
<feature type="chain" id="PRO_0000074576" description="N-acetyltransferase">
    <location>
        <begin position="1"/>
        <end position="194"/>
    </location>
</feature>
<feature type="domain" description="N-acetyltransferase" evidence="1">
    <location>
        <begin position="9"/>
        <end position="173"/>
    </location>
</feature>
<evidence type="ECO:0000255" key="1">
    <source>
        <dbReference type="PROSITE-ProRule" id="PRU00532"/>
    </source>
</evidence>
<evidence type="ECO:0000305" key="2"/>
<comment type="similarity">
    <text evidence="2">Belongs to the acetyltransferase family. PAT/BAR subfamily.</text>
</comment>
<sequence>MTPRGTAEPQVRPGIAEDLTGLTNLYNHYVLRTPITFDTVPLTPEGRMQWFLSHPKDGPHRLMVAAEPAPSGPERLLGYATSSPLRPKAAYATSAEVSVYCAPDAAGRGVGTALYTALFDALAGEDLHRAYAGVTQPNDASHRLHTRFDFRPIGTYGQVGRKFGRYWDVRWYEKELGGGGADGGAGRLHQTGRM</sequence>
<accession>Q54225</accession>
<name>NAT_STRGR</name>
<keyword id="KW-0012">Acyltransferase</keyword>
<keyword id="KW-0808">Transferase</keyword>